<organism>
    <name type="scientific">Staphylococcus aureus (strain Mu50 / ATCC 700699)</name>
    <dbReference type="NCBI Taxonomy" id="158878"/>
    <lineage>
        <taxon>Bacteria</taxon>
        <taxon>Bacillati</taxon>
        <taxon>Bacillota</taxon>
        <taxon>Bacilli</taxon>
        <taxon>Bacillales</taxon>
        <taxon>Staphylococcaceae</taxon>
        <taxon>Staphylococcus</taxon>
    </lineage>
</organism>
<protein>
    <recommendedName>
        <fullName evidence="1">ATP synthase subunit c</fullName>
    </recommendedName>
    <alternativeName>
        <fullName evidence="1">ATP synthase F(0) sector subunit c</fullName>
    </alternativeName>
    <alternativeName>
        <fullName evidence="1">F-type ATPase subunit c</fullName>
        <shortName evidence="1">F-ATPase subunit c</shortName>
    </alternativeName>
    <alternativeName>
        <fullName evidence="1">Lipid-binding protein</fullName>
    </alternativeName>
</protein>
<keyword id="KW-0066">ATP synthesis</keyword>
<keyword id="KW-1003">Cell membrane</keyword>
<keyword id="KW-0138">CF(0)</keyword>
<keyword id="KW-0375">Hydrogen ion transport</keyword>
<keyword id="KW-0406">Ion transport</keyword>
<keyword id="KW-0446">Lipid-binding</keyword>
<keyword id="KW-0472">Membrane</keyword>
<keyword id="KW-0812">Transmembrane</keyword>
<keyword id="KW-1133">Transmembrane helix</keyword>
<keyword id="KW-0813">Transport</keyword>
<sequence length="70" mass="6979">MNLIAAAIAIGLSALGAGIGNGLIVSRTVEGVARQPEARGQLMGIMFIGVGLVEALPIIGVVIAFMTFAG</sequence>
<proteinExistence type="inferred from homology"/>
<reference key="1">
    <citation type="journal article" date="2001" name="Lancet">
        <title>Whole genome sequencing of meticillin-resistant Staphylococcus aureus.</title>
        <authorList>
            <person name="Kuroda M."/>
            <person name="Ohta T."/>
            <person name="Uchiyama I."/>
            <person name="Baba T."/>
            <person name="Yuzawa H."/>
            <person name="Kobayashi I."/>
            <person name="Cui L."/>
            <person name="Oguchi A."/>
            <person name="Aoki K."/>
            <person name="Nagai Y."/>
            <person name="Lian J.-Q."/>
            <person name="Ito T."/>
            <person name="Kanamori M."/>
            <person name="Matsumaru H."/>
            <person name="Maruyama A."/>
            <person name="Murakami H."/>
            <person name="Hosoyama A."/>
            <person name="Mizutani-Ui Y."/>
            <person name="Takahashi N.K."/>
            <person name="Sawano T."/>
            <person name="Inoue R."/>
            <person name="Kaito C."/>
            <person name="Sekimizu K."/>
            <person name="Hirakawa H."/>
            <person name="Kuhara S."/>
            <person name="Goto S."/>
            <person name="Yabuzaki J."/>
            <person name="Kanehisa M."/>
            <person name="Yamashita A."/>
            <person name="Oshima K."/>
            <person name="Furuya K."/>
            <person name="Yoshino C."/>
            <person name="Shiba T."/>
            <person name="Hattori M."/>
            <person name="Ogasawara N."/>
            <person name="Hayashi H."/>
            <person name="Hiramatsu K."/>
        </authorList>
    </citation>
    <scope>NUCLEOTIDE SEQUENCE [LARGE SCALE GENOMIC DNA]</scope>
    <source>
        <strain>Mu50 / ATCC 700699</strain>
    </source>
</reference>
<name>ATPL_STAAM</name>
<feature type="chain" id="PRO_1000184501" description="ATP synthase subunit c">
    <location>
        <begin position="1"/>
        <end position="70"/>
    </location>
</feature>
<feature type="transmembrane region" description="Helical" evidence="1">
    <location>
        <begin position="4"/>
        <end position="24"/>
    </location>
</feature>
<feature type="transmembrane region" description="Helical" evidence="1">
    <location>
        <begin position="45"/>
        <end position="65"/>
    </location>
</feature>
<feature type="site" description="Reversibly protonated during proton transport" evidence="1">
    <location>
        <position position="54"/>
    </location>
</feature>
<evidence type="ECO:0000255" key="1">
    <source>
        <dbReference type="HAMAP-Rule" id="MF_01396"/>
    </source>
</evidence>
<dbReference type="EMBL" id="BA000017">
    <property type="protein sequence ID" value="BAB58270.1"/>
    <property type="molecule type" value="Genomic_DNA"/>
</dbReference>
<dbReference type="RefSeq" id="WP_001048816.1">
    <property type="nucleotide sequence ID" value="NC_002758.2"/>
</dbReference>
<dbReference type="SMR" id="Q99SF0"/>
<dbReference type="GeneID" id="98346415"/>
<dbReference type="KEGG" id="sav:SAV2108"/>
<dbReference type="HOGENOM" id="CLU_148047_1_1_9"/>
<dbReference type="PhylomeDB" id="Q99SF0"/>
<dbReference type="Proteomes" id="UP000002481">
    <property type="component" value="Chromosome"/>
</dbReference>
<dbReference type="GO" id="GO:0005886">
    <property type="term" value="C:plasma membrane"/>
    <property type="evidence" value="ECO:0007669"/>
    <property type="project" value="UniProtKB-SubCell"/>
</dbReference>
<dbReference type="GO" id="GO:0045259">
    <property type="term" value="C:proton-transporting ATP synthase complex"/>
    <property type="evidence" value="ECO:0007669"/>
    <property type="project" value="UniProtKB-KW"/>
</dbReference>
<dbReference type="GO" id="GO:0033177">
    <property type="term" value="C:proton-transporting two-sector ATPase complex, proton-transporting domain"/>
    <property type="evidence" value="ECO:0007669"/>
    <property type="project" value="InterPro"/>
</dbReference>
<dbReference type="GO" id="GO:0008289">
    <property type="term" value="F:lipid binding"/>
    <property type="evidence" value="ECO:0007669"/>
    <property type="project" value="UniProtKB-KW"/>
</dbReference>
<dbReference type="GO" id="GO:0046933">
    <property type="term" value="F:proton-transporting ATP synthase activity, rotational mechanism"/>
    <property type="evidence" value="ECO:0007669"/>
    <property type="project" value="UniProtKB-UniRule"/>
</dbReference>
<dbReference type="CDD" id="cd18185">
    <property type="entry name" value="ATP-synt_Fo_c_ATPE"/>
    <property type="match status" value="1"/>
</dbReference>
<dbReference type="FunFam" id="1.20.20.10:FF:000004">
    <property type="entry name" value="ATP synthase subunit c"/>
    <property type="match status" value="1"/>
</dbReference>
<dbReference type="Gene3D" id="1.20.20.10">
    <property type="entry name" value="F1F0 ATP synthase subunit C"/>
    <property type="match status" value="1"/>
</dbReference>
<dbReference type="HAMAP" id="MF_01396">
    <property type="entry name" value="ATP_synth_c_bact"/>
    <property type="match status" value="1"/>
</dbReference>
<dbReference type="InterPro" id="IPR005953">
    <property type="entry name" value="ATP_synth_csu_bac/chlpt"/>
</dbReference>
<dbReference type="InterPro" id="IPR000454">
    <property type="entry name" value="ATP_synth_F0_csu"/>
</dbReference>
<dbReference type="InterPro" id="IPR020537">
    <property type="entry name" value="ATP_synth_F0_csu_DDCD_BS"/>
</dbReference>
<dbReference type="InterPro" id="IPR038662">
    <property type="entry name" value="ATP_synth_F0_csu_sf"/>
</dbReference>
<dbReference type="InterPro" id="IPR002379">
    <property type="entry name" value="ATPase_proteolipid_c-like_dom"/>
</dbReference>
<dbReference type="InterPro" id="IPR035921">
    <property type="entry name" value="F/V-ATP_Csub_sf"/>
</dbReference>
<dbReference type="NCBIfam" id="TIGR01260">
    <property type="entry name" value="ATP_synt_c"/>
    <property type="match status" value="1"/>
</dbReference>
<dbReference type="NCBIfam" id="NF005363">
    <property type="entry name" value="PRK06876.1"/>
    <property type="match status" value="1"/>
</dbReference>
<dbReference type="Pfam" id="PF00137">
    <property type="entry name" value="ATP-synt_C"/>
    <property type="match status" value="1"/>
</dbReference>
<dbReference type="PRINTS" id="PR00124">
    <property type="entry name" value="ATPASEC"/>
</dbReference>
<dbReference type="SUPFAM" id="SSF81333">
    <property type="entry name" value="F1F0 ATP synthase subunit C"/>
    <property type="match status" value="1"/>
</dbReference>
<dbReference type="PROSITE" id="PS00605">
    <property type="entry name" value="ATPASE_C"/>
    <property type="match status" value="1"/>
</dbReference>
<gene>
    <name evidence="1" type="primary">atpE</name>
    <name type="ordered locus">SAV2108</name>
</gene>
<accession>Q99SF0</accession>
<comment type="function">
    <text evidence="1">F(1)F(0) ATP synthase produces ATP from ADP in the presence of a proton or sodium gradient. F-type ATPases consist of two structural domains, F(1) containing the extramembraneous catalytic core and F(0) containing the membrane proton channel, linked together by a central stalk and a peripheral stalk. During catalysis, ATP synthesis in the catalytic domain of F(1) is coupled via a rotary mechanism of the central stalk subunits to proton translocation.</text>
</comment>
<comment type="function">
    <text evidence="1">Key component of the F(0) channel; it plays a direct role in translocation across the membrane. A homomeric c-ring of between 10-14 subunits forms the central stalk rotor element with the F(1) delta and epsilon subunits.</text>
</comment>
<comment type="subunit">
    <text evidence="1">F-type ATPases have 2 components, F(1) - the catalytic core - and F(0) - the membrane proton channel. F(1) has five subunits: alpha(3), beta(3), gamma(1), delta(1), epsilon(1). F(0) has three main subunits: a(1), b(2) and c(10-14). The alpha and beta chains form an alternating ring which encloses part of the gamma chain. F(1) is attached to F(0) by a central stalk formed by the gamma and epsilon chains, while a peripheral stalk is formed by the delta and b chains.</text>
</comment>
<comment type="subcellular location">
    <subcellularLocation>
        <location evidence="1">Cell membrane</location>
        <topology evidence="1">Multi-pass membrane protein</topology>
    </subcellularLocation>
</comment>
<comment type="similarity">
    <text evidence="1">Belongs to the ATPase C chain family.</text>
</comment>